<name>SOBP_HUMAN</name>
<protein>
    <recommendedName>
        <fullName>Sine oculis-binding protein homolog</fullName>
    </recommendedName>
    <alternativeName>
        <fullName>Jackson circler protein 1</fullName>
    </alternativeName>
</protein>
<reference evidence="9" key="1">
    <citation type="submission" date="2006-04" db="EMBL/GenBank/DDBJ databases">
        <title>Mutations in Jxc1 cause deafness, vestibular deficits and cochlear malformation in the Jackson circler (jc) mutant mouse.</title>
        <authorList>
            <person name="Chen Z."/>
            <person name="Noben-Trauth K."/>
        </authorList>
    </citation>
    <scope>NUCLEOTIDE SEQUENCE [MRNA]</scope>
    <scope>VARIANT GLY-683</scope>
</reference>
<reference evidence="7" key="2">
    <citation type="journal article" date="2003" name="Nature">
        <title>The DNA sequence and analysis of human chromosome 6.</title>
        <authorList>
            <person name="Mungall A.J."/>
            <person name="Palmer S.A."/>
            <person name="Sims S.K."/>
            <person name="Edwards C.A."/>
            <person name="Ashurst J.L."/>
            <person name="Wilming L."/>
            <person name="Jones M.C."/>
            <person name="Horton R."/>
            <person name="Hunt S.E."/>
            <person name="Scott C.E."/>
            <person name="Gilbert J.G.R."/>
            <person name="Clamp M.E."/>
            <person name="Bethel G."/>
            <person name="Milne S."/>
            <person name="Ainscough R."/>
            <person name="Almeida J.P."/>
            <person name="Ambrose K.D."/>
            <person name="Andrews T.D."/>
            <person name="Ashwell R.I.S."/>
            <person name="Babbage A.K."/>
            <person name="Bagguley C.L."/>
            <person name="Bailey J."/>
            <person name="Banerjee R."/>
            <person name="Barker D.J."/>
            <person name="Barlow K.F."/>
            <person name="Bates K."/>
            <person name="Beare D.M."/>
            <person name="Beasley H."/>
            <person name="Beasley O."/>
            <person name="Bird C.P."/>
            <person name="Blakey S.E."/>
            <person name="Bray-Allen S."/>
            <person name="Brook J."/>
            <person name="Brown A.J."/>
            <person name="Brown J.Y."/>
            <person name="Burford D.C."/>
            <person name="Burrill W."/>
            <person name="Burton J."/>
            <person name="Carder C."/>
            <person name="Carter N.P."/>
            <person name="Chapman J.C."/>
            <person name="Clark S.Y."/>
            <person name="Clark G."/>
            <person name="Clee C.M."/>
            <person name="Clegg S."/>
            <person name="Cobley V."/>
            <person name="Collier R.E."/>
            <person name="Collins J.E."/>
            <person name="Colman L.K."/>
            <person name="Corby N.R."/>
            <person name="Coville G.J."/>
            <person name="Culley K.M."/>
            <person name="Dhami P."/>
            <person name="Davies J."/>
            <person name="Dunn M."/>
            <person name="Earthrowl M.E."/>
            <person name="Ellington A.E."/>
            <person name="Evans K.A."/>
            <person name="Faulkner L."/>
            <person name="Francis M.D."/>
            <person name="Frankish A."/>
            <person name="Frankland J."/>
            <person name="French L."/>
            <person name="Garner P."/>
            <person name="Garnett J."/>
            <person name="Ghori M.J."/>
            <person name="Gilby L.M."/>
            <person name="Gillson C.J."/>
            <person name="Glithero R.J."/>
            <person name="Grafham D.V."/>
            <person name="Grant M."/>
            <person name="Gribble S."/>
            <person name="Griffiths C."/>
            <person name="Griffiths M.N.D."/>
            <person name="Hall R."/>
            <person name="Halls K.S."/>
            <person name="Hammond S."/>
            <person name="Harley J.L."/>
            <person name="Hart E.A."/>
            <person name="Heath P.D."/>
            <person name="Heathcott R."/>
            <person name="Holmes S.J."/>
            <person name="Howden P.J."/>
            <person name="Howe K.L."/>
            <person name="Howell G.R."/>
            <person name="Huckle E."/>
            <person name="Humphray S.J."/>
            <person name="Humphries M.D."/>
            <person name="Hunt A.R."/>
            <person name="Johnson C.M."/>
            <person name="Joy A.A."/>
            <person name="Kay M."/>
            <person name="Keenan S.J."/>
            <person name="Kimberley A.M."/>
            <person name="King A."/>
            <person name="Laird G.K."/>
            <person name="Langford C."/>
            <person name="Lawlor S."/>
            <person name="Leongamornlert D.A."/>
            <person name="Leversha M."/>
            <person name="Lloyd C.R."/>
            <person name="Lloyd D.M."/>
            <person name="Loveland J.E."/>
            <person name="Lovell J."/>
            <person name="Martin S."/>
            <person name="Mashreghi-Mohammadi M."/>
            <person name="Maslen G.L."/>
            <person name="Matthews L."/>
            <person name="McCann O.T."/>
            <person name="McLaren S.J."/>
            <person name="McLay K."/>
            <person name="McMurray A."/>
            <person name="Moore M.J.F."/>
            <person name="Mullikin J.C."/>
            <person name="Niblett D."/>
            <person name="Nickerson T."/>
            <person name="Novik K.L."/>
            <person name="Oliver K."/>
            <person name="Overton-Larty E.K."/>
            <person name="Parker A."/>
            <person name="Patel R."/>
            <person name="Pearce A.V."/>
            <person name="Peck A.I."/>
            <person name="Phillimore B.J.C.T."/>
            <person name="Phillips S."/>
            <person name="Plumb R.W."/>
            <person name="Porter K.M."/>
            <person name="Ramsey Y."/>
            <person name="Ranby S.A."/>
            <person name="Rice C.M."/>
            <person name="Ross M.T."/>
            <person name="Searle S.M."/>
            <person name="Sehra H.K."/>
            <person name="Sheridan E."/>
            <person name="Skuce C.D."/>
            <person name="Smith S."/>
            <person name="Smith M."/>
            <person name="Spraggon L."/>
            <person name="Squares S.L."/>
            <person name="Steward C.A."/>
            <person name="Sycamore N."/>
            <person name="Tamlyn-Hall G."/>
            <person name="Tester J."/>
            <person name="Theaker A.J."/>
            <person name="Thomas D.W."/>
            <person name="Thorpe A."/>
            <person name="Tracey A."/>
            <person name="Tromans A."/>
            <person name="Tubby B."/>
            <person name="Wall M."/>
            <person name="Wallis J.M."/>
            <person name="West A.P."/>
            <person name="White S.S."/>
            <person name="Whitehead S.L."/>
            <person name="Whittaker H."/>
            <person name="Wild A."/>
            <person name="Willey D.J."/>
            <person name="Wilmer T.E."/>
            <person name="Wood J.M."/>
            <person name="Wray P.W."/>
            <person name="Wyatt J.C."/>
            <person name="Young L."/>
            <person name="Younger R.M."/>
            <person name="Bentley D.R."/>
            <person name="Coulson A."/>
            <person name="Durbin R.M."/>
            <person name="Hubbard T."/>
            <person name="Sulston J.E."/>
            <person name="Dunham I."/>
            <person name="Rogers J."/>
            <person name="Beck S."/>
        </authorList>
    </citation>
    <scope>NUCLEOTIDE SEQUENCE [LARGE SCALE GENOMIC DNA]</scope>
</reference>
<reference evidence="10" key="3">
    <citation type="journal article" date="2004" name="Nat. Genet.">
        <title>Complete sequencing and characterization of 21,243 full-length human cDNAs.</title>
        <authorList>
            <person name="Ota T."/>
            <person name="Suzuki Y."/>
            <person name="Nishikawa T."/>
            <person name="Otsuki T."/>
            <person name="Sugiyama T."/>
            <person name="Irie R."/>
            <person name="Wakamatsu A."/>
            <person name="Hayashi K."/>
            <person name="Sato H."/>
            <person name="Nagai K."/>
            <person name="Kimura K."/>
            <person name="Makita H."/>
            <person name="Sekine M."/>
            <person name="Obayashi M."/>
            <person name="Nishi T."/>
            <person name="Shibahara T."/>
            <person name="Tanaka T."/>
            <person name="Ishii S."/>
            <person name="Yamamoto J."/>
            <person name="Saito K."/>
            <person name="Kawai Y."/>
            <person name="Isono Y."/>
            <person name="Nakamura Y."/>
            <person name="Nagahari K."/>
            <person name="Murakami K."/>
            <person name="Yasuda T."/>
            <person name="Iwayanagi T."/>
            <person name="Wagatsuma M."/>
            <person name="Shiratori A."/>
            <person name="Sudo H."/>
            <person name="Hosoiri T."/>
            <person name="Kaku Y."/>
            <person name="Kodaira H."/>
            <person name="Kondo H."/>
            <person name="Sugawara M."/>
            <person name="Takahashi M."/>
            <person name="Kanda K."/>
            <person name="Yokoi T."/>
            <person name="Furuya T."/>
            <person name="Kikkawa E."/>
            <person name="Omura Y."/>
            <person name="Abe K."/>
            <person name="Kamihara K."/>
            <person name="Katsuta N."/>
            <person name="Sato K."/>
            <person name="Tanikawa M."/>
            <person name="Yamazaki M."/>
            <person name="Ninomiya K."/>
            <person name="Ishibashi T."/>
            <person name="Yamashita H."/>
            <person name="Murakawa K."/>
            <person name="Fujimori K."/>
            <person name="Tanai H."/>
            <person name="Kimata M."/>
            <person name="Watanabe M."/>
            <person name="Hiraoka S."/>
            <person name="Chiba Y."/>
            <person name="Ishida S."/>
            <person name="Ono Y."/>
            <person name="Takiguchi S."/>
            <person name="Watanabe S."/>
            <person name="Yosida M."/>
            <person name="Hotuta T."/>
            <person name="Kusano J."/>
            <person name="Kanehori K."/>
            <person name="Takahashi-Fujii A."/>
            <person name="Hara H."/>
            <person name="Tanase T.-O."/>
            <person name="Nomura Y."/>
            <person name="Togiya S."/>
            <person name="Komai F."/>
            <person name="Hara R."/>
            <person name="Takeuchi K."/>
            <person name="Arita M."/>
            <person name="Imose N."/>
            <person name="Musashino K."/>
            <person name="Yuuki H."/>
            <person name="Oshima A."/>
            <person name="Sasaki N."/>
            <person name="Aotsuka S."/>
            <person name="Yoshikawa Y."/>
            <person name="Matsunawa H."/>
            <person name="Ichihara T."/>
            <person name="Shiohata N."/>
            <person name="Sano S."/>
            <person name="Moriya S."/>
            <person name="Momiyama H."/>
            <person name="Satoh N."/>
            <person name="Takami S."/>
            <person name="Terashima Y."/>
            <person name="Suzuki O."/>
            <person name="Nakagawa S."/>
            <person name="Senoh A."/>
            <person name="Mizoguchi H."/>
            <person name="Goto Y."/>
            <person name="Shimizu F."/>
            <person name="Wakebe H."/>
            <person name="Hishigaki H."/>
            <person name="Watanabe T."/>
            <person name="Sugiyama A."/>
            <person name="Takemoto M."/>
            <person name="Kawakami B."/>
            <person name="Yamazaki M."/>
            <person name="Watanabe K."/>
            <person name="Kumagai A."/>
            <person name="Itakura S."/>
            <person name="Fukuzumi Y."/>
            <person name="Fujimori Y."/>
            <person name="Komiyama M."/>
            <person name="Tashiro H."/>
            <person name="Tanigami A."/>
            <person name="Fujiwara T."/>
            <person name="Ono T."/>
            <person name="Yamada K."/>
            <person name="Fujii Y."/>
            <person name="Ozaki K."/>
            <person name="Hirao M."/>
            <person name="Ohmori Y."/>
            <person name="Kawabata A."/>
            <person name="Hikiji T."/>
            <person name="Kobatake N."/>
            <person name="Inagaki H."/>
            <person name="Ikema Y."/>
            <person name="Okamoto S."/>
            <person name="Okitani R."/>
            <person name="Kawakami T."/>
            <person name="Noguchi S."/>
            <person name="Itoh T."/>
            <person name="Shigeta K."/>
            <person name="Senba T."/>
            <person name="Matsumura K."/>
            <person name="Nakajima Y."/>
            <person name="Mizuno T."/>
            <person name="Morinaga M."/>
            <person name="Sasaki M."/>
            <person name="Togashi T."/>
            <person name="Oyama M."/>
            <person name="Hata H."/>
            <person name="Watanabe M."/>
            <person name="Komatsu T."/>
            <person name="Mizushima-Sugano J."/>
            <person name="Satoh T."/>
            <person name="Shirai Y."/>
            <person name="Takahashi Y."/>
            <person name="Nakagawa K."/>
            <person name="Okumura K."/>
            <person name="Nagase T."/>
            <person name="Nomura N."/>
            <person name="Kikuchi H."/>
            <person name="Masuho Y."/>
            <person name="Yamashita R."/>
            <person name="Nakai K."/>
            <person name="Yada T."/>
            <person name="Nakamura Y."/>
            <person name="Ohara O."/>
            <person name="Isogai T."/>
            <person name="Sugano S."/>
        </authorList>
    </citation>
    <scope>NUCLEOTIDE SEQUENCE [LARGE SCALE MRNA] OF 1-224</scope>
    <source>
        <tissue evidence="10">Amygdala</tissue>
    </source>
</reference>
<reference evidence="8" key="4">
    <citation type="journal article" date="2004" name="Genome Res.">
        <title>The status, quality, and expansion of the NIH full-length cDNA project: the Mammalian Gene Collection (MGC).</title>
        <authorList>
            <consortium name="The MGC Project Team"/>
        </authorList>
    </citation>
    <scope>NUCLEOTIDE SEQUENCE [LARGE SCALE MRNA] OF 1-140</scope>
    <source>
        <tissue evidence="8">Brain</tissue>
    </source>
</reference>
<reference key="5">
    <citation type="journal article" date="2010" name="Am. J. Hum. Genet.">
        <title>SOBP is mutated in syndromic and nonsyndromic intellectual disability and is highly expressed in the brain limbic system.</title>
        <authorList>
            <person name="Birk E."/>
            <person name="Har-Zahav A."/>
            <person name="Manzini C.M."/>
            <person name="Pasmanik-Chor M."/>
            <person name="Kornreich L."/>
            <person name="Walsh C.A."/>
            <person name="Noben-Trauth K."/>
            <person name="Albin A."/>
            <person name="Simon A.J."/>
            <person name="Colleaux L."/>
            <person name="Morad Y."/>
            <person name="Rainshtein L."/>
            <person name="Tischfield D.J."/>
            <person name="Wang P."/>
            <person name="Magal N."/>
            <person name="Maya I."/>
            <person name="Shoshani N."/>
            <person name="Rechavi G."/>
            <person name="Gothelf D."/>
            <person name="Maydan G."/>
            <person name="Shohat M."/>
            <person name="Basel-Vanagaite L."/>
        </authorList>
    </citation>
    <scope>INVOLVEMENT IN MRAMS</scope>
</reference>
<reference key="6">
    <citation type="journal article" date="2012" name="J. Biol. Chem.">
        <title>PolySUMO-binding proteins identified through a string search.</title>
        <authorList>
            <person name="Sun H."/>
            <person name="Hunter T."/>
        </authorList>
    </citation>
    <scope>IDENTIFICATION OF REPEAT SUMO-INTERACTING MOTIF</scope>
    <scope>INTERACTION WITH SUMO1 AND SUMO2</scope>
</reference>
<reference key="7">
    <citation type="journal article" date="2017" name="Nat. Struct. Mol. Biol.">
        <title>Site-specific mapping of the human SUMO proteome reveals co-modification with phosphorylation.</title>
        <authorList>
            <person name="Hendriks I.A."/>
            <person name="Lyon D."/>
            <person name="Young C."/>
            <person name="Jensen L.J."/>
            <person name="Vertegaal A.C."/>
            <person name="Nielsen M.L."/>
        </authorList>
    </citation>
    <scope>SUMOYLATION [LARGE SCALE ANALYSIS] AT LYS-677</scope>
    <scope>IDENTIFICATION BY MASS SPECTROMETRY [LARGE SCALE ANALYSIS]</scope>
</reference>
<sequence>MAEMEKEGRPPENKRSRKPAHPVKREINEEMKNFAENTMNELLGWYGYDKVELKDGEDIEFRSYPTDGESRQHISVLKENSLPKPKLPEDSVISPYNISTGYSGLATGNGLSDSPAGSKDHGSVPIIVPLIPPPFIKPPAEDDVSNVQIMCAWCQKVGIKRYSLSMGSEVKSFCSEKCFAACRRAYFKRNKARDEDGHAENFPQQHYAKETPRLAFKNNCELLVCDWCKHIRHTKEYLDFGDGERRLQFCSAKCLNQYKMDIFYKETQANLPAGLCSTLHPPMENKAEGTGVQLLTPDSWNIPLTDARRKAPSPVATAGQSQGPGPSASTTVSPSDTANCSVTKIPTPVPKSIPISETPNIPPVSVQPPASIGPPLGVPPRSPPMVMTNRGPVPLPIFMEQQIMQQIRPPFIRGPPHHASNPNSPLSNPMLPGIGPPPGGPRNLGPTSSPMHRPMLSPHIHPPSTPTMPGNPPGLLPPPPPGAPLPSLPFPPVSMMPNGPMPVPQMMNFGLPSLAPLVPPPTLLVPYPVIVPLPVPIPIPIPIPHVSDSKPPNGFSSNGENFIPNAPGDSAAAGGKPSGHSLSPRDSKQGSSKSADSPPGCSGQALSLAPTPAEHGRSEVVDLTRRAGSPPGPPGAGGQLGFPGVLQGPQDGVIDLTVGHRARLHNVIHRALHAHVKAEREPSAAERRTCGGCRDGHCSPPAAGDPGPGAPAGPEAAAACNVIVNGTRGAAAEGAKSAEPPPEQPPPPPPPAPPKKLLSPEEPAVSELESVKENNCASNCHLDGEAAKKLMGEEALAGGDKSDPNLNNPADEDHAYALRMLPKTGCVIQPVPKPAEKAAMAPCIISSPMLSAGPEDLEPPLKRRCLRIRNQNK</sequence>
<dbReference type="EMBL" id="DQ507800">
    <property type="protein sequence ID" value="ABF72848.1"/>
    <property type="molecule type" value="mRNA"/>
</dbReference>
<dbReference type="EMBL" id="AL096816">
    <property type="status" value="NOT_ANNOTATED_CDS"/>
    <property type="molecule type" value="Genomic_DNA"/>
</dbReference>
<dbReference type="EMBL" id="AL671934">
    <property type="status" value="NOT_ANNOTATED_CDS"/>
    <property type="molecule type" value="Genomic_DNA"/>
</dbReference>
<dbReference type="EMBL" id="AL121957">
    <property type="status" value="NOT_ANNOTATED_CDS"/>
    <property type="molecule type" value="Genomic_DNA"/>
</dbReference>
<dbReference type="EMBL" id="AK090879">
    <property type="protein sequence ID" value="BAC03537.1"/>
    <property type="status" value="ALT_SEQ"/>
    <property type="molecule type" value="mRNA"/>
</dbReference>
<dbReference type="EMBL" id="BC091526">
    <property type="protein sequence ID" value="AAH91526.2"/>
    <property type="status" value="ALT_SEQ"/>
    <property type="molecule type" value="mRNA"/>
</dbReference>
<dbReference type="CCDS" id="CCDS43488.1"/>
<dbReference type="RefSeq" id="NP_060483.3">
    <property type="nucleotide sequence ID" value="NM_018013.4"/>
</dbReference>
<dbReference type="RefSeq" id="XP_047274919.1">
    <property type="nucleotide sequence ID" value="XM_047418963.1"/>
</dbReference>
<dbReference type="BioGRID" id="120399">
    <property type="interactions" value="9"/>
</dbReference>
<dbReference type="FunCoup" id="A7XYQ1">
    <property type="interactions" value="1578"/>
</dbReference>
<dbReference type="IntAct" id="A7XYQ1">
    <property type="interactions" value="4"/>
</dbReference>
<dbReference type="MINT" id="A7XYQ1"/>
<dbReference type="STRING" id="9606.ENSP00000318900"/>
<dbReference type="GlyGen" id="A7XYQ1">
    <property type="glycosylation" value="2 sites"/>
</dbReference>
<dbReference type="iPTMnet" id="A7XYQ1"/>
<dbReference type="PhosphoSitePlus" id="A7XYQ1"/>
<dbReference type="BioMuta" id="SOBP"/>
<dbReference type="jPOST" id="A7XYQ1"/>
<dbReference type="MassIVE" id="A7XYQ1"/>
<dbReference type="PaxDb" id="9606-ENSP00000318900"/>
<dbReference type="PeptideAtlas" id="A7XYQ1"/>
<dbReference type="ProteomicsDB" id="1816"/>
<dbReference type="Antibodypedia" id="32175">
    <property type="antibodies" value="59 antibodies from 13 providers"/>
</dbReference>
<dbReference type="DNASU" id="55084"/>
<dbReference type="Ensembl" id="ENST00000317357.10">
    <property type="protein sequence ID" value="ENSP00000318900.5"/>
    <property type="gene ID" value="ENSG00000112320.12"/>
</dbReference>
<dbReference type="GeneID" id="55084"/>
<dbReference type="KEGG" id="hsa:55084"/>
<dbReference type="MANE-Select" id="ENST00000317357.10">
    <property type="protein sequence ID" value="ENSP00000318900.5"/>
    <property type="RefSeq nucleotide sequence ID" value="NM_018013.4"/>
    <property type="RefSeq protein sequence ID" value="NP_060483.3"/>
</dbReference>
<dbReference type="UCSC" id="uc003prx.4">
    <property type="organism name" value="human"/>
</dbReference>
<dbReference type="AGR" id="HGNC:29256"/>
<dbReference type="CTD" id="55084"/>
<dbReference type="DisGeNET" id="55084"/>
<dbReference type="GeneCards" id="SOBP"/>
<dbReference type="HGNC" id="HGNC:29256">
    <property type="gene designation" value="SOBP"/>
</dbReference>
<dbReference type="HPA" id="ENSG00000112320">
    <property type="expression patterns" value="Low tissue specificity"/>
</dbReference>
<dbReference type="MalaCards" id="SOBP"/>
<dbReference type="MIM" id="613667">
    <property type="type" value="gene"/>
</dbReference>
<dbReference type="MIM" id="613671">
    <property type="type" value="phenotype"/>
</dbReference>
<dbReference type="neXtProt" id="NX_A7XYQ1"/>
<dbReference type="OpenTargets" id="ENSG00000112320"/>
<dbReference type="Orphanet" id="562559">
    <property type="disease" value="Anterior maxillary protrusion-strabismus-intellectual disability syndrome"/>
</dbReference>
<dbReference type="PharmGKB" id="PA162404346"/>
<dbReference type="VEuPathDB" id="HostDB:ENSG00000112320"/>
<dbReference type="eggNOG" id="ENOG502QZ8A">
    <property type="taxonomic scope" value="Eukaryota"/>
</dbReference>
<dbReference type="GeneTree" id="ENSGT00940000154164"/>
<dbReference type="HOGENOM" id="CLU_012732_0_0_1"/>
<dbReference type="InParanoid" id="A7XYQ1"/>
<dbReference type="OMA" id="MAPCVIS"/>
<dbReference type="OrthoDB" id="6250723at2759"/>
<dbReference type="PAN-GO" id="A7XYQ1">
    <property type="GO annotations" value="3 GO annotations based on evolutionary models"/>
</dbReference>
<dbReference type="PhylomeDB" id="A7XYQ1"/>
<dbReference type="TreeFam" id="TF324359"/>
<dbReference type="PathwayCommons" id="A7XYQ1"/>
<dbReference type="SignaLink" id="A7XYQ1"/>
<dbReference type="BioGRID-ORCS" id="55084">
    <property type="hits" value="8 hits in 1143 CRISPR screens"/>
</dbReference>
<dbReference type="ChiTaRS" id="SOBP">
    <property type="organism name" value="human"/>
</dbReference>
<dbReference type="GeneWiki" id="Sobp"/>
<dbReference type="GenomeRNAi" id="55084"/>
<dbReference type="Pharos" id="A7XYQ1">
    <property type="development level" value="Tbio"/>
</dbReference>
<dbReference type="PRO" id="PR:A7XYQ1"/>
<dbReference type="Proteomes" id="UP000005640">
    <property type="component" value="Chromosome 6"/>
</dbReference>
<dbReference type="RNAct" id="A7XYQ1">
    <property type="molecule type" value="protein"/>
</dbReference>
<dbReference type="Bgee" id="ENSG00000112320">
    <property type="expression patterns" value="Expressed in endothelial cell and 207 other cell types or tissues"/>
</dbReference>
<dbReference type="ExpressionAtlas" id="A7XYQ1">
    <property type="expression patterns" value="baseline and differential"/>
</dbReference>
<dbReference type="GO" id="GO:0005634">
    <property type="term" value="C:nucleus"/>
    <property type="evidence" value="ECO:0000318"/>
    <property type="project" value="GO_Central"/>
</dbReference>
<dbReference type="GO" id="GO:0032184">
    <property type="term" value="F:SUMO polymer binding"/>
    <property type="evidence" value="ECO:0007669"/>
    <property type="project" value="Ensembl"/>
</dbReference>
<dbReference type="GO" id="GO:0008270">
    <property type="term" value="F:zinc ion binding"/>
    <property type="evidence" value="ECO:0007669"/>
    <property type="project" value="UniProtKB-KW"/>
</dbReference>
<dbReference type="GO" id="GO:0048513">
    <property type="term" value="P:animal organ development"/>
    <property type="evidence" value="ECO:0000318"/>
    <property type="project" value="GO_Central"/>
</dbReference>
<dbReference type="GO" id="GO:0090102">
    <property type="term" value="P:cochlea development"/>
    <property type="evidence" value="ECO:0007669"/>
    <property type="project" value="Ensembl"/>
</dbReference>
<dbReference type="GO" id="GO:0050890">
    <property type="term" value="P:cognition"/>
    <property type="evidence" value="ECO:0000315"/>
    <property type="project" value="HGNC"/>
</dbReference>
<dbReference type="GO" id="GO:0042472">
    <property type="term" value="P:inner ear morphogenesis"/>
    <property type="evidence" value="ECO:0000318"/>
    <property type="project" value="GO_Central"/>
</dbReference>
<dbReference type="GO" id="GO:0007626">
    <property type="term" value="P:locomotory behavior"/>
    <property type="evidence" value="ECO:0007669"/>
    <property type="project" value="Ensembl"/>
</dbReference>
<dbReference type="GO" id="GO:0007605">
    <property type="term" value="P:sensory perception of sound"/>
    <property type="evidence" value="ECO:0007669"/>
    <property type="project" value="Ensembl"/>
</dbReference>
<dbReference type="InterPro" id="IPR026092">
    <property type="entry name" value="RAI2/SOBP"/>
</dbReference>
<dbReference type="InterPro" id="IPR010507">
    <property type="entry name" value="Znf_MYM"/>
</dbReference>
<dbReference type="PANTHER" id="PTHR23186">
    <property type="entry name" value="RETINOIC ACID-INDUCED PROTEIN 2"/>
    <property type="match status" value="1"/>
</dbReference>
<dbReference type="PANTHER" id="PTHR23186:SF2">
    <property type="entry name" value="SINE OCULIS-BINDING PROTEIN HOMOLOG"/>
    <property type="match status" value="1"/>
</dbReference>
<dbReference type="Pfam" id="PF15279">
    <property type="entry name" value="SOBP"/>
    <property type="match status" value="1"/>
</dbReference>
<dbReference type="Pfam" id="PF06467">
    <property type="entry name" value="zf-FCS"/>
    <property type="match status" value="1"/>
</dbReference>
<accession>A7XYQ1</accession>
<accession>B0QZ12</accession>
<accession>Q5BJD4</accession>
<accession>Q8N2B2</accession>
<keyword id="KW-0991">Intellectual disability</keyword>
<keyword id="KW-1017">Isopeptide bond</keyword>
<keyword id="KW-0479">Metal-binding</keyword>
<keyword id="KW-0597">Phosphoprotein</keyword>
<keyword id="KW-1267">Proteomics identification</keyword>
<keyword id="KW-1185">Reference proteome</keyword>
<keyword id="KW-0677">Repeat</keyword>
<keyword id="KW-0832">Ubl conjugation</keyword>
<keyword id="KW-0862">Zinc</keyword>
<keyword id="KW-0863">Zinc-finger</keyword>
<organism>
    <name type="scientific">Homo sapiens</name>
    <name type="common">Human</name>
    <dbReference type="NCBI Taxonomy" id="9606"/>
    <lineage>
        <taxon>Eukaryota</taxon>
        <taxon>Metazoa</taxon>
        <taxon>Chordata</taxon>
        <taxon>Craniata</taxon>
        <taxon>Vertebrata</taxon>
        <taxon>Euteleostomi</taxon>
        <taxon>Mammalia</taxon>
        <taxon>Eutheria</taxon>
        <taxon>Euarchontoglires</taxon>
        <taxon>Primates</taxon>
        <taxon>Haplorrhini</taxon>
        <taxon>Catarrhini</taxon>
        <taxon>Hominidae</taxon>
        <taxon>Homo</taxon>
    </lineage>
</organism>
<evidence type="ECO:0000250" key="1">
    <source>
        <dbReference type="UniProtKB" id="Q0P5V2"/>
    </source>
</evidence>
<evidence type="ECO:0000255" key="2"/>
<evidence type="ECO:0000256" key="3">
    <source>
        <dbReference type="SAM" id="MobiDB-lite"/>
    </source>
</evidence>
<evidence type="ECO:0000269" key="4">
    <source>
    </source>
</evidence>
<evidence type="ECO:0000269" key="5">
    <source>
    </source>
</evidence>
<evidence type="ECO:0000269" key="6">
    <source ref="1"/>
</evidence>
<evidence type="ECO:0000305" key="7"/>
<evidence type="ECO:0000312" key="8">
    <source>
        <dbReference type="EMBL" id="AAH91526.2"/>
    </source>
</evidence>
<evidence type="ECO:0000312" key="9">
    <source>
        <dbReference type="EMBL" id="ABF72848.1"/>
    </source>
</evidence>
<evidence type="ECO:0000312" key="10">
    <source>
        <dbReference type="EMBL" id="BAC03537.1"/>
    </source>
</evidence>
<evidence type="ECO:0007744" key="11">
    <source>
    </source>
</evidence>
<gene>
    <name evidence="8" type="primary">SOBP</name>
    <name evidence="9" type="synonym">JXC1</name>
</gene>
<comment type="function">
    <text evidence="1">Implicated in development of the cochlea.</text>
</comment>
<comment type="subunit">
    <text evidence="5">Interacts (via SIM domains) with SUMO1 and SUMO2.</text>
</comment>
<comment type="disease" evidence="4">
    <disease id="DI-02951">
        <name>Impaired intellectual development, anterior maxillary protrusion, and strabismus</name>
        <acronym>MRAMS</acronym>
        <description>A syndrome characterized by severe intellectual disability, strabismus and dysmorphic features such as anterior maxillary protrusion with vertical maxillary excess, open bite and prominent crowded teeth. Some patients may lack dysmorphic features and manifest temporal lobe epilepsy and psychosis. Esotropia and amblyopia are present in some individuals.</description>
        <dbReference type="MIM" id="613671"/>
    </disease>
    <text>The disease is caused by variants affecting the gene represented in this entry.</text>
</comment>
<comment type="similarity">
    <text evidence="2">Belongs to the SOBP family.</text>
</comment>
<comment type="sequence caution" evidence="7">
    <conflict type="miscellaneous discrepancy">
        <sequence resource="EMBL-CDS" id="AAH91526"/>
    </conflict>
    <text>Intron retention.</text>
</comment>
<comment type="sequence caution" evidence="7">
    <conflict type="miscellaneous discrepancy">
        <sequence resource="EMBL-CDS" id="BAC03537"/>
    </conflict>
    <text>Intron retention.</text>
</comment>
<proteinExistence type="evidence at protein level"/>
<feature type="chain" id="PRO_0000312232" description="Sine oculis-binding protein homolog">
    <location>
        <begin position="1"/>
        <end position="873"/>
    </location>
</feature>
<feature type="zinc finger region" description="FCS-type 1" evidence="2">
    <location>
        <begin position="142"/>
        <end position="180"/>
    </location>
</feature>
<feature type="zinc finger region" description="FCS-type 2" evidence="2">
    <location>
        <begin position="216"/>
        <end position="256"/>
    </location>
</feature>
<feature type="region of interest" description="Disordered" evidence="3">
    <location>
        <begin position="1"/>
        <end position="26"/>
    </location>
</feature>
<feature type="region of interest" description="Disordered" evidence="3">
    <location>
        <begin position="308"/>
        <end position="339"/>
    </location>
</feature>
<feature type="region of interest" description="Disordered" evidence="3">
    <location>
        <begin position="413"/>
        <end position="484"/>
    </location>
</feature>
<feature type="region of interest" description="Disordered" evidence="3">
    <location>
        <begin position="550"/>
        <end position="646"/>
    </location>
</feature>
<feature type="region of interest" description="Disordered" evidence="3">
    <location>
        <begin position="730"/>
        <end position="771"/>
    </location>
</feature>
<feature type="short sequence motif" description="SUMO interaction motif 1 (SIM); mediates the binding to polysumoylated substrates">
    <location>
        <begin position="620"/>
        <end position="624"/>
    </location>
</feature>
<feature type="short sequence motif" description="SUMO interaction motif 2 (SIM); mediates the binding to polysumoylated substrates">
    <location>
        <begin position="653"/>
        <end position="657"/>
    </location>
</feature>
<feature type="compositionally biased region" description="Basic and acidic residues" evidence="3">
    <location>
        <begin position="1"/>
        <end position="14"/>
    </location>
</feature>
<feature type="compositionally biased region" description="Polar residues" evidence="3">
    <location>
        <begin position="318"/>
        <end position="339"/>
    </location>
</feature>
<feature type="compositionally biased region" description="Low complexity" evidence="3">
    <location>
        <begin position="417"/>
        <end position="433"/>
    </location>
</feature>
<feature type="compositionally biased region" description="Pro residues" evidence="3">
    <location>
        <begin position="460"/>
        <end position="484"/>
    </location>
</feature>
<feature type="compositionally biased region" description="Basic and acidic residues" evidence="3">
    <location>
        <begin position="614"/>
        <end position="625"/>
    </location>
</feature>
<feature type="compositionally biased region" description="Pro residues" evidence="3">
    <location>
        <begin position="739"/>
        <end position="754"/>
    </location>
</feature>
<feature type="modified residue" description="Phosphoserine" evidence="1">
    <location>
        <position position="629"/>
    </location>
</feature>
<feature type="modified residue" description="Phosphoserine" evidence="1">
    <location>
        <position position="699"/>
    </location>
</feature>
<feature type="cross-link" description="Glycyl lysine isopeptide (Lys-Gly) (interchain with G-Cter in SUMO2)" evidence="11">
    <location>
        <position position="677"/>
    </location>
</feature>
<feature type="sequence variant" id="VAR_062215" description="In dbSNP:rs9486659." evidence="6">
    <original>S</original>
    <variation>G</variation>
    <location>
        <position position="683"/>
    </location>
</feature>
<feature type="sequence conflict" description="In Ref. 1; ABF72848." evidence="7" ref="1">
    <original>L</original>
    <variation>M</variation>
    <location>
        <position position="623"/>
    </location>
</feature>
<feature type="sequence conflict" description="In Ref. 1; ABF72848." evidence="7" ref="1">
    <original>L</original>
    <variation>M</variation>
    <location>
        <position position="646"/>
    </location>
</feature>